<organism>
    <name type="scientific">Schizosaccharomyces pombe (strain 972 / ATCC 24843)</name>
    <name type="common">Fission yeast</name>
    <dbReference type="NCBI Taxonomy" id="284812"/>
    <lineage>
        <taxon>Eukaryota</taxon>
        <taxon>Fungi</taxon>
        <taxon>Dikarya</taxon>
        <taxon>Ascomycota</taxon>
        <taxon>Taphrinomycotina</taxon>
        <taxon>Schizosaccharomycetes</taxon>
        <taxon>Schizosaccharomycetales</taxon>
        <taxon>Schizosaccharomycetaceae</taxon>
        <taxon>Schizosaccharomyces</taxon>
    </lineage>
</organism>
<keyword id="KW-0050">Antiport</keyword>
<keyword id="KW-0472">Membrane</keyword>
<keyword id="KW-0496">Mitochondrion</keyword>
<keyword id="KW-0999">Mitochondrion inner membrane</keyword>
<keyword id="KW-1185">Reference proteome</keyword>
<keyword id="KW-0677">Repeat</keyword>
<keyword id="KW-0812">Transmembrane</keyword>
<keyword id="KW-1133">Transmembrane helix</keyword>
<keyword id="KW-0813">Transport</keyword>
<dbReference type="EMBL" id="Z49974">
    <property type="protein sequence ID" value="CAA90275.1"/>
    <property type="molecule type" value="Genomic_DNA"/>
</dbReference>
<dbReference type="EMBL" id="CU329671">
    <property type="protein sequence ID" value="CAA19176.1"/>
    <property type="molecule type" value="Genomic_DNA"/>
</dbReference>
<dbReference type="EMBL" id="D89102">
    <property type="protein sequence ID" value="BAA13765.1"/>
    <property type="molecule type" value="mRNA"/>
</dbReference>
<dbReference type="PIR" id="T40526">
    <property type="entry name" value="T40526"/>
</dbReference>
<dbReference type="PIR" id="T42011">
    <property type="entry name" value="T42011"/>
</dbReference>
<dbReference type="RefSeq" id="NP_595323.1">
    <property type="nucleotide sequence ID" value="NM_001021230.2"/>
</dbReference>
<dbReference type="SMR" id="Q09188"/>
<dbReference type="BioGRID" id="277416">
    <property type="interactions" value="6"/>
</dbReference>
<dbReference type="FunCoup" id="Q09188">
    <property type="interactions" value="287"/>
</dbReference>
<dbReference type="IntAct" id="Q09188">
    <property type="interactions" value="1"/>
</dbReference>
<dbReference type="STRING" id="284812.Q09188"/>
<dbReference type="iPTMnet" id="Q09188"/>
<dbReference type="PaxDb" id="4896-SPBC530.10c.1"/>
<dbReference type="EnsemblFungi" id="SPBC530.10c.1">
    <property type="protein sequence ID" value="SPBC530.10c.1:pep"/>
    <property type="gene ID" value="SPBC530.10c"/>
</dbReference>
<dbReference type="GeneID" id="2540900"/>
<dbReference type="KEGG" id="spo:2540900"/>
<dbReference type="PomBase" id="SPBC530.10c">
    <property type="gene designation" value="anc1"/>
</dbReference>
<dbReference type="VEuPathDB" id="FungiDB:SPBC530.10c"/>
<dbReference type="eggNOG" id="KOG0749">
    <property type="taxonomic scope" value="Eukaryota"/>
</dbReference>
<dbReference type="HOGENOM" id="CLU_015166_12_0_1"/>
<dbReference type="InParanoid" id="Q09188"/>
<dbReference type="OMA" id="CWATIYK"/>
<dbReference type="PhylomeDB" id="Q09188"/>
<dbReference type="Reactome" id="R-SPO-1268020">
    <property type="pathway name" value="Mitochondrial protein import"/>
</dbReference>
<dbReference type="Reactome" id="R-SPO-166187">
    <property type="pathway name" value="Mitochondrial Uncoupling"/>
</dbReference>
<dbReference type="Reactome" id="R-SPO-83936">
    <property type="pathway name" value="Transport of nucleosides and free purine and pyrimidine bases across the plasma membrane"/>
</dbReference>
<dbReference type="Reactome" id="R-SPO-9837999">
    <property type="pathway name" value="Mitochondrial protein degradation"/>
</dbReference>
<dbReference type="PRO" id="PR:Q09188"/>
<dbReference type="Proteomes" id="UP000002485">
    <property type="component" value="Chromosome II"/>
</dbReference>
<dbReference type="GO" id="GO:0005743">
    <property type="term" value="C:mitochondrial inner membrane"/>
    <property type="evidence" value="ECO:0000316"/>
    <property type="project" value="PomBase"/>
</dbReference>
<dbReference type="GO" id="GO:0005739">
    <property type="term" value="C:mitochondrion"/>
    <property type="evidence" value="ECO:0007005"/>
    <property type="project" value="PomBase"/>
</dbReference>
<dbReference type="GO" id="GO:0005471">
    <property type="term" value="F:ATP:ADP antiporter activity"/>
    <property type="evidence" value="ECO:0000316"/>
    <property type="project" value="PomBase"/>
</dbReference>
<dbReference type="GO" id="GO:0140021">
    <property type="term" value="P:mitochondrial ADP transmembrane transport"/>
    <property type="evidence" value="ECO:0000316"/>
    <property type="project" value="PomBase"/>
</dbReference>
<dbReference type="GO" id="GO:1990544">
    <property type="term" value="P:mitochondrial ATP transmembrane transport"/>
    <property type="evidence" value="ECO:0000316"/>
    <property type="project" value="PomBase"/>
</dbReference>
<dbReference type="FunFam" id="1.50.40.10:FF:000001">
    <property type="entry name" value="ADP,ATP carrier protein, mitochondrial"/>
    <property type="match status" value="1"/>
</dbReference>
<dbReference type="Gene3D" id="1.50.40.10">
    <property type="entry name" value="Mitochondrial carrier domain"/>
    <property type="match status" value="1"/>
</dbReference>
<dbReference type="InterPro" id="IPR002113">
    <property type="entry name" value="ADT_euk_type"/>
</dbReference>
<dbReference type="InterPro" id="IPR002067">
    <property type="entry name" value="Mit_carrier"/>
</dbReference>
<dbReference type="InterPro" id="IPR018108">
    <property type="entry name" value="Mitochondrial_sb/sol_carrier"/>
</dbReference>
<dbReference type="InterPro" id="IPR023395">
    <property type="entry name" value="Mt_carrier_dom_sf"/>
</dbReference>
<dbReference type="PANTHER" id="PTHR45635">
    <property type="entry name" value="ADP,ATP CARRIER PROTEIN 1-RELATED-RELATED"/>
    <property type="match status" value="1"/>
</dbReference>
<dbReference type="PANTHER" id="PTHR45635:SF14">
    <property type="entry name" value="ADP_ATP TRANSLOCASE"/>
    <property type="match status" value="1"/>
</dbReference>
<dbReference type="Pfam" id="PF00153">
    <property type="entry name" value="Mito_carr"/>
    <property type="match status" value="3"/>
</dbReference>
<dbReference type="PRINTS" id="PR00927">
    <property type="entry name" value="ADPTRNSLCASE"/>
</dbReference>
<dbReference type="PRINTS" id="PR00926">
    <property type="entry name" value="MITOCARRIER"/>
</dbReference>
<dbReference type="SUPFAM" id="SSF103506">
    <property type="entry name" value="Mitochondrial carrier"/>
    <property type="match status" value="1"/>
</dbReference>
<dbReference type="PROSITE" id="PS50920">
    <property type="entry name" value="SOLCAR"/>
    <property type="match status" value="3"/>
</dbReference>
<accession>Q09188</accession>
<accession>P78754</accession>
<name>ADT_SCHPO</name>
<comment type="function">
    <text evidence="1 6">ADP:ATP antiporter that mediates import of ADP into the mitochondrial matrix for ATP synthesis, and export of ATP out to fuel the cell (PubMed:8675018). Cycles between the cytoplasmic-open state (c-state) and the matrix-open state (m-state): operates by the alternating access mechanism with a single substrate-binding site intermittently exposed to either the cytosolic (c-state) or matrix (m-state) side of the inner mitochondrial membrane (By similarity).</text>
</comment>
<comment type="catalytic activity">
    <reaction evidence="8">
        <text>ADP(in) + ATP(out) = ADP(out) + ATP(in)</text>
        <dbReference type="Rhea" id="RHEA:34999"/>
        <dbReference type="ChEBI" id="CHEBI:30616"/>
        <dbReference type="ChEBI" id="CHEBI:456216"/>
    </reaction>
    <physiologicalReaction direction="left-to-right" evidence="8">
        <dbReference type="Rhea" id="RHEA:35000"/>
    </physiologicalReaction>
</comment>
<comment type="activity regulation">
    <text evidence="1">The matrix-open state (m-state) is inhibited by the membrane-permeable bongkrekic acid (BKA). The cytoplasmic-open state (c-state) is inhibited by the membrane-impermeable toxic inhibitor carboxyatractyloside (CATR).</text>
</comment>
<comment type="subunit">
    <text evidence="1">Monomer.</text>
</comment>
<comment type="subcellular location">
    <subcellularLocation>
        <location evidence="8">Mitochondrion inner membrane</location>
        <topology evidence="5">Multi-pass membrane protein</topology>
    </subcellularLocation>
</comment>
<comment type="domain">
    <text evidence="1">The transmembrane helices are not perpendicular to the plane of the membrane, but cross the membrane at an angle. Odd-numbered transmembrane helices exhibit a sharp kink, due to the presence of a conserved proline residue.</text>
</comment>
<comment type="similarity">
    <text evidence="7">Belongs to the mitochondrial carrier (TC 2.A.29) family.</text>
</comment>
<sequence>MATSSAAAAASTPVNANTITETKNSTFFFDFMMGGVSAAVSKTAAAPIERVKLLIQNQDEMIRAGRLSHRYKGIGECFKRTAAEEGVISLWRGNTANVLRYFPTQALNFAFKDKFKKMFGYKKERDGYAKWFAGNLASGGAAGAASLLFVYSLDYARTRLANDAKSAKKGGERQFNGLVDVYRKTYRSDGLRGLYRGFGPSVVGIVVYRGLYFGMYDTLKPVVLVGPLEGNFLASFLLGWAVTTGSGVASYPLDTIRRRMMMTSGEAVKYSSSFECGRQILAKEGARSFFKGAGANILRGVAGAGVLSIYDQVQLLMFGKKF</sequence>
<proteinExistence type="evidence at protein level"/>
<protein>
    <recommendedName>
        <fullName>ADP,ATP carrier protein</fullName>
    </recommendedName>
    <alternativeName>
        <fullName>ADP/ATP translocase</fullName>
    </alternativeName>
    <alternativeName>
        <fullName>Adenine nucleotide translocator</fullName>
        <shortName>ANT</shortName>
    </alternativeName>
</protein>
<reference key="1">
    <citation type="journal article" date="1996" name="Gene">
        <title>Cloning of the gene encoding the mitochondrial adenine nucleotide carrier of Schizosaccharomyces pombe by functional complementation in Saccharomyces cerevisiae.</title>
        <authorList>
            <person name="Couzin N."/>
            <person name="Trezeguet V."/>
            <person name="Saux A.L."/>
            <person name="Lauquin G.J.-M."/>
        </authorList>
    </citation>
    <scope>NUCLEOTIDE SEQUENCE [GENOMIC DNA]</scope>
    <scope>FUNCTION</scope>
    <scope>CATALYTIC ACTIVITY</scope>
    <scope>SUBCELLULAR LOCATION</scope>
    <source>
        <strain>972 / ATCC 24843</strain>
    </source>
</reference>
<reference key="2">
    <citation type="journal article" date="2002" name="Nature">
        <title>The genome sequence of Schizosaccharomyces pombe.</title>
        <authorList>
            <person name="Wood V."/>
            <person name="Gwilliam R."/>
            <person name="Rajandream M.A."/>
            <person name="Lyne M.H."/>
            <person name="Lyne R."/>
            <person name="Stewart A."/>
            <person name="Sgouros J.G."/>
            <person name="Peat N."/>
            <person name="Hayles J."/>
            <person name="Baker S.G."/>
            <person name="Basham D."/>
            <person name="Bowman S."/>
            <person name="Brooks K."/>
            <person name="Brown D."/>
            <person name="Brown S."/>
            <person name="Chillingworth T."/>
            <person name="Churcher C.M."/>
            <person name="Collins M."/>
            <person name="Connor R."/>
            <person name="Cronin A."/>
            <person name="Davis P."/>
            <person name="Feltwell T."/>
            <person name="Fraser A."/>
            <person name="Gentles S."/>
            <person name="Goble A."/>
            <person name="Hamlin N."/>
            <person name="Harris D.E."/>
            <person name="Hidalgo J."/>
            <person name="Hodgson G."/>
            <person name="Holroyd S."/>
            <person name="Hornsby T."/>
            <person name="Howarth S."/>
            <person name="Huckle E.J."/>
            <person name="Hunt S."/>
            <person name="Jagels K."/>
            <person name="James K.D."/>
            <person name="Jones L."/>
            <person name="Jones M."/>
            <person name="Leather S."/>
            <person name="McDonald S."/>
            <person name="McLean J."/>
            <person name="Mooney P."/>
            <person name="Moule S."/>
            <person name="Mungall K.L."/>
            <person name="Murphy L.D."/>
            <person name="Niblett D."/>
            <person name="Odell C."/>
            <person name="Oliver K."/>
            <person name="O'Neil S."/>
            <person name="Pearson D."/>
            <person name="Quail M.A."/>
            <person name="Rabbinowitsch E."/>
            <person name="Rutherford K.M."/>
            <person name="Rutter S."/>
            <person name="Saunders D."/>
            <person name="Seeger K."/>
            <person name="Sharp S."/>
            <person name="Skelton J."/>
            <person name="Simmonds M.N."/>
            <person name="Squares R."/>
            <person name="Squares S."/>
            <person name="Stevens K."/>
            <person name="Taylor K."/>
            <person name="Taylor R.G."/>
            <person name="Tivey A."/>
            <person name="Walsh S.V."/>
            <person name="Warren T."/>
            <person name="Whitehead S."/>
            <person name="Woodward J.R."/>
            <person name="Volckaert G."/>
            <person name="Aert R."/>
            <person name="Robben J."/>
            <person name="Grymonprez B."/>
            <person name="Weltjens I."/>
            <person name="Vanstreels E."/>
            <person name="Rieger M."/>
            <person name="Schaefer M."/>
            <person name="Mueller-Auer S."/>
            <person name="Gabel C."/>
            <person name="Fuchs M."/>
            <person name="Duesterhoeft A."/>
            <person name="Fritzc C."/>
            <person name="Holzer E."/>
            <person name="Moestl D."/>
            <person name="Hilbert H."/>
            <person name="Borzym K."/>
            <person name="Langer I."/>
            <person name="Beck A."/>
            <person name="Lehrach H."/>
            <person name="Reinhardt R."/>
            <person name="Pohl T.M."/>
            <person name="Eger P."/>
            <person name="Zimmermann W."/>
            <person name="Wedler H."/>
            <person name="Wambutt R."/>
            <person name="Purnelle B."/>
            <person name="Goffeau A."/>
            <person name="Cadieu E."/>
            <person name="Dreano S."/>
            <person name="Gloux S."/>
            <person name="Lelaure V."/>
            <person name="Mottier S."/>
            <person name="Galibert F."/>
            <person name="Aves S.J."/>
            <person name="Xiang Z."/>
            <person name="Hunt C."/>
            <person name="Moore K."/>
            <person name="Hurst S.M."/>
            <person name="Lucas M."/>
            <person name="Rochet M."/>
            <person name="Gaillardin C."/>
            <person name="Tallada V.A."/>
            <person name="Garzon A."/>
            <person name="Thode G."/>
            <person name="Daga R.R."/>
            <person name="Cruzado L."/>
            <person name="Jimenez J."/>
            <person name="Sanchez M."/>
            <person name="del Rey F."/>
            <person name="Benito J."/>
            <person name="Dominguez A."/>
            <person name="Revuelta J.L."/>
            <person name="Moreno S."/>
            <person name="Armstrong J."/>
            <person name="Forsburg S.L."/>
            <person name="Cerutti L."/>
            <person name="Lowe T."/>
            <person name="McCombie W.R."/>
            <person name="Paulsen I."/>
            <person name="Potashkin J."/>
            <person name="Shpakovski G.V."/>
            <person name="Ussery D."/>
            <person name="Barrell B.G."/>
            <person name="Nurse P."/>
        </authorList>
    </citation>
    <scope>NUCLEOTIDE SEQUENCE [LARGE SCALE GENOMIC DNA]</scope>
    <source>
        <strain>972 / ATCC 24843</strain>
    </source>
</reference>
<reference key="3">
    <citation type="journal article" date="1997" name="DNA Res.">
        <title>Identification of open reading frames in Schizosaccharomyces pombe cDNAs.</title>
        <authorList>
            <person name="Yoshioka S."/>
            <person name="Kato K."/>
            <person name="Nakai K."/>
            <person name="Okayama H."/>
            <person name="Nojima H."/>
        </authorList>
    </citation>
    <scope>NUCLEOTIDE SEQUENCE [LARGE SCALE MRNA] OF 1-305</scope>
    <source>
        <strain>PR745</strain>
    </source>
</reference>
<evidence type="ECO:0000250" key="1">
    <source>
        <dbReference type="UniProtKB" id="G2QNH0"/>
    </source>
</evidence>
<evidence type="ECO:0000250" key="2">
    <source>
        <dbReference type="UniProtKB" id="P02722"/>
    </source>
</evidence>
<evidence type="ECO:0000250" key="3">
    <source>
        <dbReference type="UniProtKB" id="P12235"/>
    </source>
</evidence>
<evidence type="ECO:0000250" key="4">
    <source>
        <dbReference type="UniProtKB" id="P18239"/>
    </source>
</evidence>
<evidence type="ECO:0000255" key="5"/>
<evidence type="ECO:0000269" key="6">
    <source>
    </source>
</evidence>
<evidence type="ECO:0000305" key="7"/>
<evidence type="ECO:0000305" key="8">
    <source>
    </source>
</evidence>
<feature type="chain" id="PRO_0000090592" description="ADP,ATP carrier protein">
    <location>
        <begin position="1"/>
        <end position="322"/>
    </location>
</feature>
<feature type="transmembrane region" description="Helical; Name=1" evidence="4">
    <location>
        <begin position="27"/>
        <end position="54"/>
    </location>
</feature>
<feature type="transmembrane region" description="Helical; Name=2" evidence="4">
    <location>
        <begin position="95"/>
        <end position="119"/>
    </location>
</feature>
<feature type="transmembrane region" description="Helical; Name=3" evidence="4">
    <location>
        <begin position="128"/>
        <end position="148"/>
    </location>
</feature>
<feature type="transmembrane region" description="Helical; Name=4" evidence="4">
    <location>
        <begin position="198"/>
        <end position="219"/>
    </location>
</feature>
<feature type="transmembrane region" description="Helical; Name=5" evidence="4">
    <location>
        <begin position="233"/>
        <end position="253"/>
    </location>
</feature>
<feature type="transmembrane region" description="Helical; Name=6" evidence="4">
    <location>
        <begin position="293"/>
        <end position="313"/>
    </location>
</feature>
<feature type="repeat" description="Solcar 1">
    <location>
        <begin position="25"/>
        <end position="118"/>
    </location>
</feature>
<feature type="repeat" description="Solcar 2">
    <location>
        <begin position="130"/>
        <end position="222"/>
    </location>
</feature>
<feature type="repeat" description="Solcar 3">
    <location>
        <begin position="230"/>
        <end position="316"/>
    </location>
</feature>
<feature type="region of interest" description="Important for transport activity" evidence="3">
    <location>
        <begin position="257"/>
        <end position="262"/>
    </location>
</feature>
<feature type="short sequence motif" description="Nucleotide carrier signature motif" evidence="2">
    <location>
        <begin position="257"/>
        <end position="262"/>
    </location>
</feature>
<feature type="binding site" evidence="2">
    <location>
        <position position="100"/>
    </location>
    <ligand>
        <name>ADP</name>
        <dbReference type="ChEBI" id="CHEBI:456216"/>
    </ligand>
</feature>
<feature type="binding site" evidence="2">
    <location>
        <position position="112"/>
    </location>
    <ligand>
        <name>ADP</name>
        <dbReference type="ChEBI" id="CHEBI:456216"/>
    </ligand>
</feature>
<feature type="binding site" evidence="2">
    <location>
        <position position="257"/>
    </location>
    <ligand>
        <name>ADP</name>
        <dbReference type="ChEBI" id="CHEBI:456216"/>
    </ligand>
</feature>
<gene>
    <name type="primary">anc1</name>
    <name type="ORF">SPBC530.10c</name>
</gene>